<gene>
    <name evidence="1" type="primary">tsf</name>
    <name type="ordered locus">BF3784</name>
</gene>
<name>EFTS_BACFN</name>
<evidence type="ECO:0000255" key="1">
    <source>
        <dbReference type="HAMAP-Rule" id="MF_00050"/>
    </source>
</evidence>
<comment type="function">
    <text evidence="1">Associates with the EF-Tu.GDP complex and induces the exchange of GDP to GTP. It remains bound to the aminoacyl-tRNA.EF-Tu.GTP complex up to the GTP hydrolysis stage on the ribosome.</text>
</comment>
<comment type="subcellular location">
    <subcellularLocation>
        <location evidence="1">Cytoplasm</location>
    </subcellularLocation>
</comment>
<comment type="similarity">
    <text evidence="1">Belongs to the EF-Ts family.</text>
</comment>
<dbReference type="EMBL" id="CR626927">
    <property type="protein sequence ID" value="CAH09464.1"/>
    <property type="molecule type" value="Genomic_DNA"/>
</dbReference>
<dbReference type="RefSeq" id="WP_005791746.1">
    <property type="nucleotide sequence ID" value="NZ_UFTH01000001.1"/>
</dbReference>
<dbReference type="SMR" id="Q5L8W8"/>
<dbReference type="PaxDb" id="272559-BF9343_3683"/>
<dbReference type="GeneID" id="60369940"/>
<dbReference type="KEGG" id="bfs:BF9343_3683"/>
<dbReference type="eggNOG" id="COG0264">
    <property type="taxonomic scope" value="Bacteria"/>
</dbReference>
<dbReference type="HOGENOM" id="CLU_047155_0_0_10"/>
<dbReference type="Proteomes" id="UP000006731">
    <property type="component" value="Chromosome"/>
</dbReference>
<dbReference type="GO" id="GO:0005737">
    <property type="term" value="C:cytoplasm"/>
    <property type="evidence" value="ECO:0007669"/>
    <property type="project" value="UniProtKB-SubCell"/>
</dbReference>
<dbReference type="GO" id="GO:0003746">
    <property type="term" value="F:translation elongation factor activity"/>
    <property type="evidence" value="ECO:0007669"/>
    <property type="project" value="UniProtKB-UniRule"/>
</dbReference>
<dbReference type="CDD" id="cd14275">
    <property type="entry name" value="UBA_EF-Ts"/>
    <property type="match status" value="1"/>
</dbReference>
<dbReference type="FunFam" id="1.10.8.10:FF:000001">
    <property type="entry name" value="Elongation factor Ts"/>
    <property type="match status" value="1"/>
</dbReference>
<dbReference type="FunFam" id="3.30.479.20:FF:000018">
    <property type="entry name" value="Elongation factor Ts"/>
    <property type="match status" value="1"/>
</dbReference>
<dbReference type="Gene3D" id="1.10.8.10">
    <property type="entry name" value="DNA helicase RuvA subunit, C-terminal domain"/>
    <property type="match status" value="1"/>
</dbReference>
<dbReference type="Gene3D" id="3.30.479.20">
    <property type="entry name" value="Elongation factor Ts, dimerisation domain"/>
    <property type="match status" value="3"/>
</dbReference>
<dbReference type="HAMAP" id="MF_00050">
    <property type="entry name" value="EF_Ts"/>
    <property type="match status" value="1"/>
</dbReference>
<dbReference type="InterPro" id="IPR036402">
    <property type="entry name" value="EF-Ts_dimer_sf"/>
</dbReference>
<dbReference type="InterPro" id="IPR001816">
    <property type="entry name" value="Transl_elong_EFTs/EF1B"/>
</dbReference>
<dbReference type="InterPro" id="IPR014039">
    <property type="entry name" value="Transl_elong_EFTs/EF1B_dimer"/>
</dbReference>
<dbReference type="InterPro" id="IPR018101">
    <property type="entry name" value="Transl_elong_Ts_CS"/>
</dbReference>
<dbReference type="InterPro" id="IPR009060">
    <property type="entry name" value="UBA-like_sf"/>
</dbReference>
<dbReference type="NCBIfam" id="TIGR00116">
    <property type="entry name" value="tsf"/>
    <property type="match status" value="1"/>
</dbReference>
<dbReference type="PANTHER" id="PTHR11741">
    <property type="entry name" value="ELONGATION FACTOR TS"/>
    <property type="match status" value="1"/>
</dbReference>
<dbReference type="PANTHER" id="PTHR11741:SF0">
    <property type="entry name" value="ELONGATION FACTOR TS, MITOCHONDRIAL"/>
    <property type="match status" value="1"/>
</dbReference>
<dbReference type="Pfam" id="PF00889">
    <property type="entry name" value="EF_TS"/>
    <property type="match status" value="1"/>
</dbReference>
<dbReference type="SUPFAM" id="SSF54713">
    <property type="entry name" value="Elongation factor Ts (EF-Ts), dimerisation domain"/>
    <property type="match status" value="2"/>
</dbReference>
<dbReference type="SUPFAM" id="SSF46934">
    <property type="entry name" value="UBA-like"/>
    <property type="match status" value="1"/>
</dbReference>
<dbReference type="PROSITE" id="PS01126">
    <property type="entry name" value="EF_TS_1"/>
    <property type="match status" value="1"/>
</dbReference>
<dbReference type="PROSITE" id="PS01127">
    <property type="entry name" value="EF_TS_2"/>
    <property type="match status" value="1"/>
</dbReference>
<feature type="chain" id="PRO_0000241462" description="Elongation factor Ts">
    <location>
        <begin position="1"/>
        <end position="330"/>
    </location>
</feature>
<feature type="region of interest" description="Involved in Mg(2+) ion dislocation from EF-Tu" evidence="1">
    <location>
        <begin position="79"/>
        <end position="82"/>
    </location>
</feature>
<sequence length="330" mass="36015">MAVTMADITKLRKMTGAGMMDCKNALTDAEGDFDKAMKIIREKGQAVAAKRSDREASEGCVLVKVEEGFGAIIALKCETDFVAQNADFVKLTQDILDAAVANKCKTLEEVLALPMGDATVAQAVTDRTGITGEKMELDGYMVLEGATIAAYNHMNRNGLCTMVAFNKKVDEQLAKQVAMQVAAMNPIAVDEDGVSEEVKQKEIEVAVEKTKVEQVQKAVEAALKKANINPAHVDSEDHMESNMAKGWITAEDVAKAKEIIATVSAEKAANMPEQMIQNIAKGRLAKFLKEVCLLNQEDIMDAKKTVREVLKEADPELKVVDFKRFTLRAE</sequence>
<reference key="1">
    <citation type="journal article" date="2005" name="Science">
        <title>Extensive DNA inversions in the B. fragilis genome control variable gene expression.</title>
        <authorList>
            <person name="Cerdeno-Tarraga A.-M."/>
            <person name="Patrick S."/>
            <person name="Crossman L.C."/>
            <person name="Blakely G."/>
            <person name="Abratt V."/>
            <person name="Lennard N."/>
            <person name="Poxton I."/>
            <person name="Duerden B."/>
            <person name="Harris B."/>
            <person name="Quail M.A."/>
            <person name="Barron A."/>
            <person name="Clark L."/>
            <person name="Corton C."/>
            <person name="Doggett J."/>
            <person name="Holden M.T.G."/>
            <person name="Larke N."/>
            <person name="Line A."/>
            <person name="Lord A."/>
            <person name="Norbertczak H."/>
            <person name="Ormond D."/>
            <person name="Price C."/>
            <person name="Rabbinowitsch E."/>
            <person name="Woodward J."/>
            <person name="Barrell B.G."/>
            <person name="Parkhill J."/>
        </authorList>
    </citation>
    <scope>NUCLEOTIDE SEQUENCE [LARGE SCALE GENOMIC DNA]</scope>
    <source>
        <strain>ATCC 25285 / DSM 2151 / CCUG 4856 / JCM 11019 / LMG 10263 / NCTC 9343 / Onslow / VPI 2553 / EN-2</strain>
    </source>
</reference>
<accession>Q5L8W8</accession>
<keyword id="KW-0963">Cytoplasm</keyword>
<keyword id="KW-0251">Elongation factor</keyword>
<keyword id="KW-0648">Protein biosynthesis</keyword>
<organism>
    <name type="scientific">Bacteroides fragilis (strain ATCC 25285 / DSM 2151 / CCUG 4856 / JCM 11019 / LMG 10263 / NCTC 9343 / Onslow / VPI 2553 / EN-2)</name>
    <dbReference type="NCBI Taxonomy" id="272559"/>
    <lineage>
        <taxon>Bacteria</taxon>
        <taxon>Pseudomonadati</taxon>
        <taxon>Bacteroidota</taxon>
        <taxon>Bacteroidia</taxon>
        <taxon>Bacteroidales</taxon>
        <taxon>Bacteroidaceae</taxon>
        <taxon>Bacteroides</taxon>
    </lineage>
</organism>
<protein>
    <recommendedName>
        <fullName evidence="1">Elongation factor Ts</fullName>
        <shortName evidence="1">EF-Ts</shortName>
    </recommendedName>
</protein>
<proteinExistence type="inferred from homology"/>